<reference key="1">
    <citation type="journal article" date="2005" name="Genome Biol.">
        <title>Full-length cDNAs from chicken bursal lymphocytes to facilitate gene function analysis.</title>
        <authorList>
            <person name="Caldwell R.B."/>
            <person name="Kierzek A.M."/>
            <person name="Arakawa H."/>
            <person name="Bezzubov Y."/>
            <person name="Zaim J."/>
            <person name="Fiedler P."/>
            <person name="Kutter S."/>
            <person name="Blagodatski A."/>
            <person name="Kostovska D."/>
            <person name="Koter M."/>
            <person name="Plachy J."/>
            <person name="Carninci P."/>
            <person name="Hayashizaki Y."/>
            <person name="Buerstedde J.-M."/>
        </authorList>
    </citation>
    <scope>NUCLEOTIDE SEQUENCE [LARGE SCALE MRNA]</scope>
    <source>
        <strain>CB</strain>
        <tissue>Bursa of Fabricius</tissue>
    </source>
</reference>
<comment type="function">
    <text evidence="1">Part of the AP-3 complex, an adaptor-related complex which is not clathrin-associated. The complex is associated with the Golgi region as well as more peripheral structures. It facilitates the budding of vesicles from the Golgi membrane and may be directly involved in trafficking to lysosomes. In concert with the BLOC-1 complex, AP-3 is required to target cargos into vesicles assembled at cell bodies for delivery into neurites and nerve terminals (By similarity).</text>
</comment>
<comment type="subunit">
    <text evidence="1">The AP-3 complex associates with the BLOC-1 complex.</text>
</comment>
<comment type="subcellular location">
    <subcellularLocation>
        <location evidence="1">Golgi apparatus</location>
    </subcellularLocation>
    <subcellularLocation>
        <location evidence="1">Cytoplasmic vesicle membrane</location>
        <topology evidence="1">Peripheral membrane protein</topology>
        <orientation evidence="1">Cytoplasmic side</orientation>
    </subcellularLocation>
    <text evidence="1">Component of the coat surrounding the cytoplasmic face of coated vesicles located at the Golgi complex.</text>
</comment>
<comment type="similarity">
    <text evidence="3">Belongs to the adaptor complexes medium subunit family.</text>
</comment>
<evidence type="ECO:0000250" key="1"/>
<evidence type="ECO:0000255" key="2">
    <source>
        <dbReference type="PROSITE-ProRule" id="PRU00404"/>
    </source>
</evidence>
<evidence type="ECO:0000305" key="3"/>
<keyword id="KW-0968">Cytoplasmic vesicle</keyword>
<keyword id="KW-0333">Golgi apparatus</keyword>
<keyword id="KW-0472">Membrane</keyword>
<keyword id="KW-0653">Protein transport</keyword>
<keyword id="KW-1185">Reference proteome</keyword>
<keyword id="KW-0813">Transport</keyword>
<feature type="chain" id="PRO_0000285806" description="AP-3 complex subunit mu-1">
    <location>
        <begin position="1"/>
        <end position="418"/>
    </location>
</feature>
<feature type="domain" description="MHD" evidence="2">
    <location>
        <begin position="176"/>
        <end position="417"/>
    </location>
</feature>
<organism>
    <name type="scientific">Gallus gallus</name>
    <name type="common">Chicken</name>
    <dbReference type="NCBI Taxonomy" id="9031"/>
    <lineage>
        <taxon>Eukaryota</taxon>
        <taxon>Metazoa</taxon>
        <taxon>Chordata</taxon>
        <taxon>Craniata</taxon>
        <taxon>Vertebrata</taxon>
        <taxon>Euteleostomi</taxon>
        <taxon>Archelosauria</taxon>
        <taxon>Archosauria</taxon>
        <taxon>Dinosauria</taxon>
        <taxon>Saurischia</taxon>
        <taxon>Theropoda</taxon>
        <taxon>Coelurosauria</taxon>
        <taxon>Aves</taxon>
        <taxon>Neognathae</taxon>
        <taxon>Galloanserae</taxon>
        <taxon>Galliformes</taxon>
        <taxon>Phasianidae</taxon>
        <taxon>Phasianinae</taxon>
        <taxon>Gallus</taxon>
    </lineage>
</organism>
<accession>Q5ZMP7</accession>
<sequence>MIHSLFLINCSGDIFLEKHWKSVVSQSVCDYFFEAQEKAIDVENVPPVISTPLHYLISIYRDKIFFVSVIQTEVPPLFVIEFLHRVADTFQDYFGECSETAIKDNVVIVYELLEEMLDNGFPLATESNILKELIKPPTILRSVVNSITGSSNVGDTLPTGQLSNIPWRRAGVKYTNNEAYFDVIEEIDAIIDKSGSTVFAEIQGVIDSCIKLSGMPDLSLSFMNPRLLDDVSFHPCIRFKRWESERVLSFIPPDGNFRLISYRVSSQNLVAIPVYVKHLISFKENSSSGRFDVTIGPKQNMGKTVEGVVMTVHMPKAVLNMNLTATQGSYTFDPVTKVLAWDVGKITPQKLPNLKGIVNLQSGAPKPEENPSLNIQFKIQQLAISGLKVNRLDMYGEKYKPFKGVKYITKAGKFQVRT</sequence>
<name>AP3M1_CHICK</name>
<protein>
    <recommendedName>
        <fullName>AP-3 complex subunit mu-1</fullName>
    </recommendedName>
    <alternativeName>
        <fullName>AP-3 adaptor complex mu3A subunit</fullName>
    </alternativeName>
    <alternativeName>
        <fullName>Adaptor-related protein complex 3 subunit mu-1</fullName>
    </alternativeName>
    <alternativeName>
        <fullName>Mu-adaptin 3A</fullName>
    </alternativeName>
    <alternativeName>
        <fullName>Mu3A-adaptin</fullName>
    </alternativeName>
</protein>
<gene>
    <name type="primary">AP3M1</name>
    <name type="ORF">RCJMB04_1h22</name>
</gene>
<proteinExistence type="evidence at transcript level"/>
<dbReference type="EMBL" id="AJ719337">
    <property type="protein sequence ID" value="CAG30996.1"/>
    <property type="molecule type" value="mRNA"/>
</dbReference>
<dbReference type="RefSeq" id="NP_001026398.1">
    <property type="nucleotide sequence ID" value="NM_001031227.1"/>
</dbReference>
<dbReference type="SMR" id="Q5ZMP7"/>
<dbReference type="FunCoup" id="Q5ZMP7">
    <property type="interactions" value="2889"/>
</dbReference>
<dbReference type="STRING" id="9031.ENSGALP00000054086"/>
<dbReference type="PaxDb" id="9031-ENSGALP00000008112"/>
<dbReference type="GeneID" id="423736"/>
<dbReference type="KEGG" id="gga:423736"/>
<dbReference type="CTD" id="26985"/>
<dbReference type="VEuPathDB" id="HostDB:geneid_423736"/>
<dbReference type="eggNOG" id="KOG2740">
    <property type="taxonomic scope" value="Eukaryota"/>
</dbReference>
<dbReference type="InParanoid" id="Q5ZMP7"/>
<dbReference type="OrthoDB" id="870at2759"/>
<dbReference type="PhylomeDB" id="Q5ZMP7"/>
<dbReference type="PRO" id="PR:Q5ZMP7"/>
<dbReference type="Proteomes" id="UP000000539">
    <property type="component" value="Unassembled WGS sequence"/>
</dbReference>
<dbReference type="GO" id="GO:1904115">
    <property type="term" value="C:axon cytoplasm"/>
    <property type="evidence" value="ECO:0007669"/>
    <property type="project" value="GOC"/>
</dbReference>
<dbReference type="GO" id="GO:0030131">
    <property type="term" value="C:clathrin adaptor complex"/>
    <property type="evidence" value="ECO:0007669"/>
    <property type="project" value="InterPro"/>
</dbReference>
<dbReference type="GO" id="GO:0031410">
    <property type="term" value="C:cytoplasmic vesicle"/>
    <property type="evidence" value="ECO:0000318"/>
    <property type="project" value="GO_Central"/>
</dbReference>
<dbReference type="GO" id="GO:0030659">
    <property type="term" value="C:cytoplasmic vesicle membrane"/>
    <property type="evidence" value="ECO:0007669"/>
    <property type="project" value="UniProtKB-SubCell"/>
</dbReference>
<dbReference type="GO" id="GO:0005794">
    <property type="term" value="C:Golgi apparatus"/>
    <property type="evidence" value="ECO:0007669"/>
    <property type="project" value="UniProtKB-SubCell"/>
</dbReference>
<dbReference type="GO" id="GO:0008089">
    <property type="term" value="P:anterograde axonal transport"/>
    <property type="evidence" value="ECO:0000250"/>
    <property type="project" value="UniProtKB"/>
</dbReference>
<dbReference type="GO" id="GO:0048490">
    <property type="term" value="P:anterograde synaptic vesicle transport"/>
    <property type="evidence" value="ECO:0000250"/>
    <property type="project" value="UniProtKB"/>
</dbReference>
<dbReference type="GO" id="GO:0006897">
    <property type="term" value="P:endocytosis"/>
    <property type="evidence" value="ECO:0000318"/>
    <property type="project" value="GO_Central"/>
</dbReference>
<dbReference type="GO" id="GO:0006886">
    <property type="term" value="P:intracellular protein transport"/>
    <property type="evidence" value="ECO:0007669"/>
    <property type="project" value="InterPro"/>
</dbReference>
<dbReference type="CDD" id="cd09260">
    <property type="entry name" value="AP-3_Mu3A_Cterm"/>
    <property type="match status" value="1"/>
</dbReference>
<dbReference type="CDD" id="cd14837">
    <property type="entry name" value="AP3_Mu_N"/>
    <property type="match status" value="1"/>
</dbReference>
<dbReference type="FunFam" id="3.30.450.60:FF:000012">
    <property type="entry name" value="AP-3 complex subunit mu-1 isoform X1"/>
    <property type="match status" value="1"/>
</dbReference>
<dbReference type="FunFam" id="2.60.40.1170:FF:000006">
    <property type="entry name" value="Putative AP-3 complex subunit mu-2-like"/>
    <property type="match status" value="1"/>
</dbReference>
<dbReference type="Gene3D" id="3.30.450.60">
    <property type="match status" value="1"/>
</dbReference>
<dbReference type="Gene3D" id="2.60.40.1170">
    <property type="entry name" value="Mu homology domain, subdomain B"/>
    <property type="match status" value="2"/>
</dbReference>
<dbReference type="InterPro" id="IPR050431">
    <property type="entry name" value="Adaptor_comp_med_subunit"/>
</dbReference>
<dbReference type="InterPro" id="IPR036168">
    <property type="entry name" value="AP2_Mu_C_sf"/>
</dbReference>
<dbReference type="InterPro" id="IPR022775">
    <property type="entry name" value="AP_mu_sigma_su"/>
</dbReference>
<dbReference type="InterPro" id="IPR001392">
    <property type="entry name" value="Clathrin_mu"/>
</dbReference>
<dbReference type="InterPro" id="IPR018240">
    <property type="entry name" value="Clathrin_mu_CS"/>
</dbReference>
<dbReference type="InterPro" id="IPR011012">
    <property type="entry name" value="Longin-like_dom_sf"/>
</dbReference>
<dbReference type="InterPro" id="IPR028565">
    <property type="entry name" value="MHD"/>
</dbReference>
<dbReference type="PANTHER" id="PTHR10529">
    <property type="entry name" value="AP COMPLEX SUBUNIT MU"/>
    <property type="match status" value="1"/>
</dbReference>
<dbReference type="Pfam" id="PF00928">
    <property type="entry name" value="Adap_comp_sub"/>
    <property type="match status" value="1"/>
</dbReference>
<dbReference type="Pfam" id="PF01217">
    <property type="entry name" value="Clat_adaptor_s"/>
    <property type="match status" value="1"/>
</dbReference>
<dbReference type="PIRSF" id="PIRSF005992">
    <property type="entry name" value="Clathrin_mu"/>
    <property type="match status" value="1"/>
</dbReference>
<dbReference type="PRINTS" id="PR00314">
    <property type="entry name" value="CLATHRINADPT"/>
</dbReference>
<dbReference type="SUPFAM" id="SSF49447">
    <property type="entry name" value="Second domain of Mu2 adaptin subunit (ap50) of ap2 adaptor"/>
    <property type="match status" value="1"/>
</dbReference>
<dbReference type="SUPFAM" id="SSF64356">
    <property type="entry name" value="SNARE-like"/>
    <property type="match status" value="1"/>
</dbReference>
<dbReference type="PROSITE" id="PS00990">
    <property type="entry name" value="CLAT_ADAPTOR_M_1"/>
    <property type="match status" value="1"/>
</dbReference>
<dbReference type="PROSITE" id="PS00991">
    <property type="entry name" value="CLAT_ADAPTOR_M_2"/>
    <property type="match status" value="1"/>
</dbReference>
<dbReference type="PROSITE" id="PS51072">
    <property type="entry name" value="MHD"/>
    <property type="match status" value="1"/>
</dbReference>